<dbReference type="EC" id="3.4.24.-"/>
<dbReference type="EMBL" id="AJ315734">
    <property type="protein sequence ID" value="CAC86015.1"/>
    <property type="molecule type" value="mRNA"/>
</dbReference>
<dbReference type="EMBL" id="FJ515844">
    <property type="protein sequence ID" value="ACS13738.1"/>
    <property type="molecule type" value="Genomic_DNA"/>
</dbReference>
<dbReference type="EMBL" id="AC010269">
    <property type="status" value="NOT_ANNOTATED_CDS"/>
    <property type="molecule type" value="Genomic_DNA"/>
</dbReference>
<dbReference type="EMBL" id="AC022424">
    <property type="status" value="NOT_ANNOTATED_CDS"/>
    <property type="molecule type" value="Genomic_DNA"/>
</dbReference>
<dbReference type="EMBL" id="AC091978">
    <property type="status" value="NOT_ANNOTATED_CDS"/>
    <property type="molecule type" value="Genomic_DNA"/>
</dbReference>
<dbReference type="EMBL" id="AB095949">
    <property type="protein sequence ID" value="BAC23125.1"/>
    <property type="molecule type" value="mRNA"/>
</dbReference>
<dbReference type="CCDS" id="CCDS43299.1">
    <molecule id="Q8TE57-1"/>
</dbReference>
<dbReference type="RefSeq" id="NP_620687.2">
    <molecule id="Q8TE57-1"/>
    <property type="nucleotide sequence ID" value="NM_139056.4"/>
</dbReference>
<dbReference type="SMR" id="Q8TE57"/>
<dbReference type="BioGRID" id="128082">
    <property type="interactions" value="5"/>
</dbReference>
<dbReference type="FunCoup" id="Q8TE57">
    <property type="interactions" value="29"/>
</dbReference>
<dbReference type="IntAct" id="Q8TE57">
    <property type="interactions" value="2"/>
</dbReference>
<dbReference type="STRING" id="9606.ENSP00000274181"/>
<dbReference type="MEROPS" id="M12.026"/>
<dbReference type="GlyCosmos" id="Q8TE57">
    <property type="glycosylation" value="7 sites, No reported glycans"/>
</dbReference>
<dbReference type="GlyGen" id="Q8TE57">
    <property type="glycosylation" value="8 sites, 1 O-linked glycan (1 site)"/>
</dbReference>
<dbReference type="iPTMnet" id="Q8TE57"/>
<dbReference type="PhosphoSitePlus" id="Q8TE57"/>
<dbReference type="BioMuta" id="ADAMTS16"/>
<dbReference type="DMDM" id="296439429"/>
<dbReference type="MassIVE" id="Q8TE57"/>
<dbReference type="PaxDb" id="9606-ENSP00000274181"/>
<dbReference type="PeptideAtlas" id="Q8TE57"/>
<dbReference type="ProteomicsDB" id="74398">
    <molecule id="Q8TE57-1"/>
</dbReference>
<dbReference type="ProteomicsDB" id="74399">
    <molecule id="Q8TE57-2"/>
</dbReference>
<dbReference type="Antibodypedia" id="59056">
    <property type="antibodies" value="51 antibodies from 15 providers"/>
</dbReference>
<dbReference type="DNASU" id="170690"/>
<dbReference type="Ensembl" id="ENST00000274181.7">
    <molecule id="Q8TE57-1"/>
    <property type="protein sequence ID" value="ENSP00000274181.7"/>
    <property type="gene ID" value="ENSG00000145536.15"/>
</dbReference>
<dbReference type="GeneID" id="170690"/>
<dbReference type="KEGG" id="hsa:170690"/>
<dbReference type="MANE-Select" id="ENST00000274181.7">
    <property type="protein sequence ID" value="ENSP00000274181.7"/>
    <property type="RefSeq nucleotide sequence ID" value="NM_139056.4"/>
    <property type="RefSeq protein sequence ID" value="NP_620687.2"/>
</dbReference>
<dbReference type="UCSC" id="uc003jdl.4">
    <molecule id="Q8TE57-1"/>
    <property type="organism name" value="human"/>
</dbReference>
<dbReference type="AGR" id="HGNC:17108"/>
<dbReference type="CTD" id="170690"/>
<dbReference type="DisGeNET" id="170690"/>
<dbReference type="GeneCards" id="ADAMTS16"/>
<dbReference type="HGNC" id="HGNC:17108">
    <property type="gene designation" value="ADAMTS16"/>
</dbReference>
<dbReference type="HPA" id="ENSG00000145536">
    <property type="expression patterns" value="Tissue enhanced (brain, ovary)"/>
</dbReference>
<dbReference type="MIM" id="607510">
    <property type="type" value="gene"/>
</dbReference>
<dbReference type="neXtProt" id="NX_Q8TE57"/>
<dbReference type="OpenTargets" id="ENSG00000145536"/>
<dbReference type="PharmGKB" id="PA24542"/>
<dbReference type="VEuPathDB" id="HostDB:ENSG00000145536"/>
<dbReference type="eggNOG" id="KOG3538">
    <property type="taxonomic scope" value="Eukaryota"/>
</dbReference>
<dbReference type="GeneTree" id="ENSGT00940000159433"/>
<dbReference type="HOGENOM" id="CLU_000660_1_0_1"/>
<dbReference type="InParanoid" id="Q8TE57"/>
<dbReference type="OMA" id="LRCAEKY"/>
<dbReference type="OrthoDB" id="10035764at2759"/>
<dbReference type="PAN-GO" id="Q8TE57">
    <property type="GO annotations" value="3 GO annotations based on evolutionary models"/>
</dbReference>
<dbReference type="PhylomeDB" id="Q8TE57"/>
<dbReference type="TreeFam" id="TF313537"/>
<dbReference type="PathwayCommons" id="Q8TE57"/>
<dbReference type="Reactome" id="R-HSA-1474228">
    <property type="pathway name" value="Degradation of the extracellular matrix"/>
</dbReference>
<dbReference type="Reactome" id="R-HSA-5083635">
    <property type="pathway name" value="Defective B3GALTL causes PpS"/>
</dbReference>
<dbReference type="Reactome" id="R-HSA-5173214">
    <property type="pathway name" value="O-glycosylation of TSR domain-containing proteins"/>
</dbReference>
<dbReference type="SignaLink" id="Q8TE57"/>
<dbReference type="BioGRID-ORCS" id="170690">
    <property type="hits" value="6 hits in 1146 CRISPR screens"/>
</dbReference>
<dbReference type="GenomeRNAi" id="170690"/>
<dbReference type="Pharos" id="Q8TE57">
    <property type="development level" value="Tbio"/>
</dbReference>
<dbReference type="PRO" id="PR:Q8TE57"/>
<dbReference type="Proteomes" id="UP000005640">
    <property type="component" value="Chromosome 5"/>
</dbReference>
<dbReference type="RNAct" id="Q8TE57">
    <property type="molecule type" value="protein"/>
</dbReference>
<dbReference type="Bgee" id="ENSG00000145536">
    <property type="expression patterns" value="Expressed in buccal mucosa cell and 107 other cell types or tissues"/>
</dbReference>
<dbReference type="ExpressionAtlas" id="Q8TE57">
    <property type="expression patterns" value="baseline and differential"/>
</dbReference>
<dbReference type="GO" id="GO:0031012">
    <property type="term" value="C:extracellular matrix"/>
    <property type="evidence" value="ECO:0000318"/>
    <property type="project" value="GO_Central"/>
</dbReference>
<dbReference type="GO" id="GO:0005576">
    <property type="term" value="C:extracellular region"/>
    <property type="evidence" value="ECO:0007669"/>
    <property type="project" value="UniProtKB-KW"/>
</dbReference>
<dbReference type="GO" id="GO:0046872">
    <property type="term" value="F:metal ion binding"/>
    <property type="evidence" value="ECO:0007669"/>
    <property type="project" value="UniProtKB-KW"/>
</dbReference>
<dbReference type="GO" id="GO:0004222">
    <property type="term" value="F:metalloendopeptidase activity"/>
    <property type="evidence" value="ECO:0000318"/>
    <property type="project" value="GO_Central"/>
</dbReference>
<dbReference type="GO" id="GO:0001658">
    <property type="term" value="P:branching involved in ureteric bud morphogenesis"/>
    <property type="evidence" value="ECO:0007669"/>
    <property type="project" value="Ensembl"/>
</dbReference>
<dbReference type="GO" id="GO:0030198">
    <property type="term" value="P:extracellular matrix organization"/>
    <property type="evidence" value="ECO:0000318"/>
    <property type="project" value="GO_Central"/>
</dbReference>
<dbReference type="GO" id="GO:0048232">
    <property type="term" value="P:male gamete generation"/>
    <property type="evidence" value="ECO:0007669"/>
    <property type="project" value="Ensembl"/>
</dbReference>
<dbReference type="GO" id="GO:0006508">
    <property type="term" value="P:proteolysis"/>
    <property type="evidence" value="ECO:0000318"/>
    <property type="project" value="GO_Central"/>
</dbReference>
<dbReference type="GO" id="GO:1902017">
    <property type="term" value="P:regulation of cilium assembly"/>
    <property type="evidence" value="ECO:0007669"/>
    <property type="project" value="Ensembl"/>
</dbReference>
<dbReference type="GO" id="GO:0003073">
    <property type="term" value="P:regulation of systemic arterial blood pressure"/>
    <property type="evidence" value="ECO:0007669"/>
    <property type="project" value="Ensembl"/>
</dbReference>
<dbReference type="CDD" id="cd04273">
    <property type="entry name" value="ZnMc_ADAMTS_like"/>
    <property type="match status" value="1"/>
</dbReference>
<dbReference type="FunFam" id="2.20.100.10:FF:000006">
    <property type="entry name" value="A disintegrin and metalloproteinase with thrombospondin motifs 1"/>
    <property type="match status" value="1"/>
</dbReference>
<dbReference type="FunFam" id="2.60.120.830:FF:000001">
    <property type="entry name" value="A disintegrin and metalloproteinase with thrombospondin motifs 1"/>
    <property type="match status" value="1"/>
</dbReference>
<dbReference type="FunFam" id="3.40.390.10:FF:000001">
    <property type="entry name" value="A disintegrin and metalloproteinase with thrombospondin motifs 1"/>
    <property type="match status" value="1"/>
</dbReference>
<dbReference type="FunFam" id="3.40.1620.60:FF:000002">
    <property type="entry name" value="A disintegrin and metalloproteinase with thrombospondin motifs 10"/>
    <property type="match status" value="1"/>
</dbReference>
<dbReference type="Gene3D" id="2.60.120.830">
    <property type="match status" value="1"/>
</dbReference>
<dbReference type="Gene3D" id="3.40.1620.60">
    <property type="match status" value="1"/>
</dbReference>
<dbReference type="Gene3D" id="3.40.390.10">
    <property type="entry name" value="Collagenase (Catalytic Domain)"/>
    <property type="match status" value="1"/>
</dbReference>
<dbReference type="Gene3D" id="2.20.100.10">
    <property type="entry name" value="Thrombospondin type-1 (TSP1) repeat"/>
    <property type="match status" value="5"/>
</dbReference>
<dbReference type="InterPro" id="IPR013273">
    <property type="entry name" value="ADAMTS/ADAMTS-like"/>
</dbReference>
<dbReference type="InterPro" id="IPR050439">
    <property type="entry name" value="ADAMTS_ADAMTS-like"/>
</dbReference>
<dbReference type="InterPro" id="IPR041645">
    <property type="entry name" value="ADAMTS_CR_2"/>
</dbReference>
<dbReference type="InterPro" id="IPR045371">
    <property type="entry name" value="ADAMTS_CR_3"/>
</dbReference>
<dbReference type="InterPro" id="IPR010294">
    <property type="entry name" value="ADAMTS_spacer1"/>
</dbReference>
<dbReference type="InterPro" id="IPR024079">
    <property type="entry name" value="MetalloPept_cat_dom_sf"/>
</dbReference>
<dbReference type="InterPro" id="IPR001590">
    <property type="entry name" value="Peptidase_M12B"/>
</dbReference>
<dbReference type="InterPro" id="IPR002870">
    <property type="entry name" value="Peptidase_M12B_N"/>
</dbReference>
<dbReference type="InterPro" id="IPR010909">
    <property type="entry name" value="PLAC"/>
</dbReference>
<dbReference type="InterPro" id="IPR000884">
    <property type="entry name" value="TSP1_rpt"/>
</dbReference>
<dbReference type="InterPro" id="IPR036383">
    <property type="entry name" value="TSP1_rpt_sf"/>
</dbReference>
<dbReference type="PANTHER" id="PTHR13723:SF140">
    <property type="entry name" value="A DISINTEGRIN AND METALLOPROTEINASE WITH THROMBOSPONDIN MOTIFS 16"/>
    <property type="match status" value="1"/>
</dbReference>
<dbReference type="PANTHER" id="PTHR13723">
    <property type="entry name" value="ADAMTS A DISINTEGRIN AND METALLOPROTEASE WITH THROMBOSPONDIN MOTIFS PROTEASE"/>
    <property type="match status" value="1"/>
</dbReference>
<dbReference type="Pfam" id="PF17771">
    <property type="entry name" value="ADAMTS_CR_2"/>
    <property type="match status" value="1"/>
</dbReference>
<dbReference type="Pfam" id="PF19236">
    <property type="entry name" value="ADAMTS_CR_3"/>
    <property type="match status" value="1"/>
</dbReference>
<dbReference type="Pfam" id="PF05986">
    <property type="entry name" value="ADAMTS_spacer1"/>
    <property type="match status" value="1"/>
</dbReference>
<dbReference type="Pfam" id="PF01562">
    <property type="entry name" value="Pep_M12B_propep"/>
    <property type="match status" value="1"/>
</dbReference>
<dbReference type="Pfam" id="PF08686">
    <property type="entry name" value="PLAC"/>
    <property type="match status" value="1"/>
</dbReference>
<dbReference type="Pfam" id="PF01421">
    <property type="entry name" value="Reprolysin"/>
    <property type="match status" value="1"/>
</dbReference>
<dbReference type="Pfam" id="PF19030">
    <property type="entry name" value="TSP1_ADAMTS"/>
    <property type="match status" value="4"/>
</dbReference>
<dbReference type="Pfam" id="PF00090">
    <property type="entry name" value="TSP_1"/>
    <property type="match status" value="1"/>
</dbReference>
<dbReference type="PRINTS" id="PR01857">
    <property type="entry name" value="ADAMTSFAMILY"/>
</dbReference>
<dbReference type="SMART" id="SM00209">
    <property type="entry name" value="TSP1"/>
    <property type="match status" value="6"/>
</dbReference>
<dbReference type="SUPFAM" id="SSF55486">
    <property type="entry name" value="Metalloproteases ('zincins'), catalytic domain"/>
    <property type="match status" value="1"/>
</dbReference>
<dbReference type="SUPFAM" id="SSF82895">
    <property type="entry name" value="TSP-1 type 1 repeat"/>
    <property type="match status" value="5"/>
</dbReference>
<dbReference type="PROSITE" id="PS50215">
    <property type="entry name" value="ADAM_MEPRO"/>
    <property type="match status" value="1"/>
</dbReference>
<dbReference type="PROSITE" id="PS50900">
    <property type="entry name" value="PLAC"/>
    <property type="match status" value="1"/>
</dbReference>
<dbReference type="PROSITE" id="PS50092">
    <property type="entry name" value="TSP1"/>
    <property type="match status" value="5"/>
</dbReference>
<name>ATS16_HUMAN</name>
<reference key="1">
    <citation type="journal article" date="2002" name="Gene">
        <title>Cloning, expression analysis, and structural characterization of seven novel human ADAMTSs, a family of metalloproteinases with disintegrin and thrombospondin-1 domains.</title>
        <authorList>
            <person name="Cal S."/>
            <person name="Obaya A.J."/>
            <person name="Llamazares M."/>
            <person name="Garabaya C."/>
            <person name="Quesada V."/>
            <person name="Lopez-Otin C."/>
        </authorList>
    </citation>
    <scope>NUCLEOTIDE SEQUENCE [MRNA] (ISOFORM 2)</scope>
</reference>
<reference key="2">
    <citation type="submission" date="2008-12" db="EMBL/GenBank/DDBJ databases">
        <authorList>
            <consortium name="NHLBI resequencing and genotyping service (RS&amp;G)"/>
        </authorList>
    </citation>
    <scope>NUCLEOTIDE SEQUENCE [GENOMIC DNA]</scope>
</reference>
<reference key="3">
    <citation type="journal article" date="2004" name="Nature">
        <title>The DNA sequence and comparative analysis of human chromosome 5.</title>
        <authorList>
            <person name="Schmutz J."/>
            <person name="Martin J."/>
            <person name="Terry A."/>
            <person name="Couronne O."/>
            <person name="Grimwood J."/>
            <person name="Lowry S."/>
            <person name="Gordon L.A."/>
            <person name="Scott D."/>
            <person name="Xie G."/>
            <person name="Huang W."/>
            <person name="Hellsten U."/>
            <person name="Tran-Gyamfi M."/>
            <person name="She X."/>
            <person name="Prabhakar S."/>
            <person name="Aerts A."/>
            <person name="Altherr M."/>
            <person name="Bajorek E."/>
            <person name="Black S."/>
            <person name="Branscomb E."/>
            <person name="Caoile C."/>
            <person name="Challacombe J.F."/>
            <person name="Chan Y.M."/>
            <person name="Denys M."/>
            <person name="Detter J.C."/>
            <person name="Escobar J."/>
            <person name="Flowers D."/>
            <person name="Fotopulos D."/>
            <person name="Glavina T."/>
            <person name="Gomez M."/>
            <person name="Gonzales E."/>
            <person name="Goodstein D."/>
            <person name="Grigoriev I."/>
            <person name="Groza M."/>
            <person name="Hammon N."/>
            <person name="Hawkins T."/>
            <person name="Haydu L."/>
            <person name="Israni S."/>
            <person name="Jett J."/>
            <person name="Kadner K."/>
            <person name="Kimball H."/>
            <person name="Kobayashi A."/>
            <person name="Lopez F."/>
            <person name="Lou Y."/>
            <person name="Martinez D."/>
            <person name="Medina C."/>
            <person name="Morgan J."/>
            <person name="Nandkeshwar R."/>
            <person name="Noonan J.P."/>
            <person name="Pitluck S."/>
            <person name="Pollard M."/>
            <person name="Predki P."/>
            <person name="Priest J."/>
            <person name="Ramirez L."/>
            <person name="Retterer J."/>
            <person name="Rodriguez A."/>
            <person name="Rogers S."/>
            <person name="Salamov A."/>
            <person name="Salazar A."/>
            <person name="Thayer N."/>
            <person name="Tice H."/>
            <person name="Tsai M."/>
            <person name="Ustaszewska A."/>
            <person name="Vo N."/>
            <person name="Wheeler J."/>
            <person name="Wu K."/>
            <person name="Yang J."/>
            <person name="Dickson M."/>
            <person name="Cheng J.-F."/>
            <person name="Eichler E.E."/>
            <person name="Olsen A."/>
            <person name="Pennacchio L.A."/>
            <person name="Rokhsar D.S."/>
            <person name="Richardson P."/>
            <person name="Lucas S.M."/>
            <person name="Myers R.M."/>
            <person name="Rubin E.M."/>
        </authorList>
    </citation>
    <scope>NUCLEOTIDE SEQUENCE [LARGE SCALE GENOMIC DNA]</scope>
</reference>
<reference key="4">
    <citation type="submission" date="2002-11" db="EMBL/GenBank/DDBJ databases">
        <title>The nucleotide sequence of a long cDNA clone isolated from human.</title>
        <authorList>
            <person name="Nagase T."/>
            <person name="Kikuno R."/>
            <person name="Ohara O."/>
        </authorList>
    </citation>
    <scope>NUCLEOTIDE SEQUENCE [LARGE SCALE MRNA] OF 204-1224 (ISOFORM 1)</scope>
    <source>
        <tissue>Brain</tissue>
    </source>
</reference>
<keyword id="KW-0025">Alternative splicing</keyword>
<keyword id="KW-0165">Cleavage on pair of basic residues</keyword>
<keyword id="KW-1015">Disulfide bond</keyword>
<keyword id="KW-0272">Extracellular matrix</keyword>
<keyword id="KW-0325">Glycoprotein</keyword>
<keyword id="KW-0378">Hydrolase</keyword>
<keyword id="KW-0479">Metal-binding</keyword>
<keyword id="KW-0482">Metalloprotease</keyword>
<keyword id="KW-0645">Protease</keyword>
<keyword id="KW-1267">Proteomics identification</keyword>
<keyword id="KW-1185">Reference proteome</keyword>
<keyword id="KW-0677">Repeat</keyword>
<keyword id="KW-0964">Secreted</keyword>
<keyword id="KW-0732">Signal</keyword>
<keyword id="KW-0862">Zinc</keyword>
<keyword id="KW-0865">Zymogen</keyword>
<evidence type="ECO:0000250" key="1"/>
<evidence type="ECO:0000255" key="2"/>
<evidence type="ECO:0000255" key="3">
    <source>
        <dbReference type="PROSITE-ProRule" id="PRU00210"/>
    </source>
</evidence>
<evidence type="ECO:0000255" key="4">
    <source>
        <dbReference type="PROSITE-ProRule" id="PRU00233"/>
    </source>
</evidence>
<evidence type="ECO:0000255" key="5">
    <source>
        <dbReference type="PROSITE-ProRule" id="PRU00276"/>
    </source>
</evidence>
<evidence type="ECO:0000256" key="6">
    <source>
        <dbReference type="SAM" id="MobiDB-lite"/>
    </source>
</evidence>
<evidence type="ECO:0000303" key="7">
    <source>
    </source>
</evidence>
<evidence type="ECO:0000305" key="8"/>
<protein>
    <recommendedName>
        <fullName>A disintegrin and metalloproteinase with thrombospondin motifs 16</fullName>
        <shortName>ADAM-TS 16</shortName>
        <shortName>ADAM-TS16</shortName>
        <shortName>ADAMTS-16</shortName>
        <ecNumber>3.4.24.-</ecNumber>
    </recommendedName>
</protein>
<proteinExistence type="evidence at protein level"/>
<sequence length="1224" mass="136203">MKPRARGWRGLAALWMLLAQVAEQAPACAMGPAAAAPGSPSVPRPPPPAERPGWMEKGEYDLVSAYEVDHRGDYVSHEIMHHQRRRRAVPVSEVESLHLRLKGSRHDFHMDLRTSSSLVAPGFIVQTLGKTGTKSVQTLPPEDFCFYQGSLRSHRNSSVALSTCQGLSGMIRTEEADYFLRPLPSHLSWKLGRAAQGSSPSHVLYKRSTEPHAPGASEVLVTSRTWELAHQPLHSSDLRLGLPQKQHFCGRRKKYMPQPPKEDLFILPDEYKSCLRHKRSLLRSHRNEELNVETLVVVDKKMMQNHGHENITTYVLTILNMVSALFKDGTIGGNINIAIVGLILLEDEQPGLVISHHADHTLSSFCQWQSGLMGKDGTRHDHAILLTGLDICSWKNEPCDTLGFAPISGMCSKYRSCTINEDTGLGLAFTIAHESGHNFGMIHDGEGNMCKKSEGNIMSPTLAGRNGVFSWSPCSRQYLHKFLSTAQAICLADQPKPVKEYKYPEKLPGELYDANTQCKWQFGEKAKLCMLDFKKDICKALWCHRIGRKCETKFMPAAEGTICGHDMWCRGGQCVKYGDEGPKPTHGHWSDWSSWSPCSRTCGGGVSHRSRLCTNPKPSHGGKFCEGSTRTLKLCNSQKCPRDSVDFRAAQCAEHNSRRFRGRHYKWKPYTQVEDQDLCKLYCIAEGFDFFFSLSNKVKDGTPCSEDSRNVCIDGICERVGCDNVLGSDAVEDVCGVCNGNNSACTIHRGLYTKHHHTNQYYHMVTIPSGARSIRIYEMNVSTSYISVRNALRRYYLNGHWTVDWPGRYKFSGTTFDYRRSYNEPENLIATGPTNETLIVELLFQGRNPGVAWEYSMPRLGTEKQPPAQPSYTWAIVRSECSVSCGGGQMTVREGCYRDLKFQVNMSFCNPKTRPVTGLVPCKVSACPPSWSVGNWSACSRTCGGGAQSRPVQCTRRVHYDSEPVPASLCPQPAPSSRQACNSQSCPPAWSAGPWAECSHTCGKGWRKRAVACKSTNPSARAQLLPDAVCTSEPKPRMHEACLLQRCHKPKKLQWLVSAWSQCSVTCERGTQKRFLKCAEKYVSGKYRELASKKCSHLPKPSLELERACAPLPCPRHPPFAAAGPSRGSWFASPWSQCTASCGGGVQTRSVQCLAGGRPASGCLLHQKPSASLACNTHFCPIAEKKDAFCKDYFHWCYLVPQHGMCSHKFYGKQCCKTCSKSNL</sequence>
<comment type="cofactor">
    <cofactor evidence="1">
        <name>Zn(2+)</name>
        <dbReference type="ChEBI" id="CHEBI:29105"/>
    </cofactor>
    <text evidence="1">Binds 1 zinc ion per subunit.</text>
</comment>
<comment type="subcellular location">
    <subcellularLocation>
        <location evidence="1">Secreted</location>
        <location evidence="1">Extracellular space</location>
        <location evidence="1">Extracellular matrix</location>
    </subcellularLocation>
</comment>
<comment type="alternative products">
    <event type="alternative splicing"/>
    <isoform>
        <id>Q8TE57-1</id>
        <name>1</name>
        <sequence type="displayed"/>
    </isoform>
    <isoform>
        <id>Q8TE57-2</id>
        <name>2</name>
        <sequence type="described" ref="VSP_007664 VSP_007665"/>
    </isoform>
</comment>
<comment type="tissue specificity">
    <text>Expressed in fetal lung and kidney and in adult prostate and ovary.</text>
</comment>
<comment type="domain">
    <text evidence="1">The spacer domain and the TSP type-1 domains are important for a tight interaction with the extracellular matrix.</text>
</comment>
<comment type="domain">
    <text>The conserved cysteine present in the cysteine-switch motif binds the catalytic zinc ion, thus inhibiting the enzyme. The dissociation of the cysteine from the zinc ion upon the activation-peptide release activates the enzyme.</text>
</comment>
<comment type="PTM">
    <text evidence="1">The precursor is cleaved by a furin endopeptidase.</text>
</comment>
<comment type="PTM">
    <text evidence="1">Glycosylated. Can be O-fucosylated by POFUT2 on a serine or a threonine residue found within the consensus sequence C1-X(2)-(S/T)-C2-G of the TSP type-1 repeat domains where C1 and C2 are the first and second cysteine residue of the repeat, respectively. Fucosylated repeats can then be further glycosylated by the addition of a beta-1,3-glucose residue by the glucosyltransferase, B3GALTL. Fucosylation mediates the efficient secretion of ADAMTS family members. Can also be C-glycosylated with one or two mannose molecules on tryptophan residues within the consensus sequence W-X-X-W of the TPRs, and N-glycosylated. These other glycosylations can also facilitate secretion (By similarity).</text>
</comment>
<organism>
    <name type="scientific">Homo sapiens</name>
    <name type="common">Human</name>
    <dbReference type="NCBI Taxonomy" id="9606"/>
    <lineage>
        <taxon>Eukaryota</taxon>
        <taxon>Metazoa</taxon>
        <taxon>Chordata</taxon>
        <taxon>Craniata</taxon>
        <taxon>Vertebrata</taxon>
        <taxon>Euteleostomi</taxon>
        <taxon>Mammalia</taxon>
        <taxon>Eutheria</taxon>
        <taxon>Euarchontoglires</taxon>
        <taxon>Primates</taxon>
        <taxon>Haplorrhini</taxon>
        <taxon>Catarrhini</taxon>
        <taxon>Hominidae</taxon>
        <taxon>Homo</taxon>
    </lineage>
</organism>
<gene>
    <name type="primary">ADAMTS16</name>
    <name type="synonym">KIAA2029</name>
</gene>
<feature type="signal peptide" evidence="2">
    <location>
        <begin position="1"/>
        <end position="24"/>
    </location>
</feature>
<feature type="propeptide" id="PRO_0000029194" evidence="1">
    <location>
        <begin position="25"/>
        <end position="279"/>
    </location>
</feature>
<feature type="chain" id="PRO_0000029195" description="A disintegrin and metalloproteinase with thrombospondin motifs 16">
    <location>
        <begin position="280"/>
        <end position="1224"/>
    </location>
</feature>
<feature type="domain" description="Peptidase M12B" evidence="5">
    <location>
        <begin position="290"/>
        <end position="495"/>
    </location>
</feature>
<feature type="domain" description="Disintegrin">
    <location>
        <begin position="496"/>
        <end position="585"/>
    </location>
</feature>
<feature type="domain" description="TSP type-1 1" evidence="3">
    <location>
        <begin position="586"/>
        <end position="641"/>
    </location>
</feature>
<feature type="domain" description="TSP type-1 2" evidence="3">
    <location>
        <begin position="874"/>
        <end position="922"/>
    </location>
</feature>
<feature type="domain" description="TSP type-1 3" evidence="3">
    <location>
        <begin position="927"/>
        <end position="987"/>
    </location>
</feature>
<feature type="domain" description="TSP type-1 4" evidence="3">
    <location>
        <begin position="988"/>
        <end position="1048"/>
    </location>
</feature>
<feature type="domain" description="TSP type-1 5" evidence="3">
    <location>
        <begin position="1051"/>
        <end position="1115"/>
    </location>
</feature>
<feature type="domain" description="TSP type-1 6" evidence="3">
    <location>
        <begin position="1127"/>
        <end position="1181"/>
    </location>
</feature>
<feature type="domain" description="PLAC" evidence="4">
    <location>
        <begin position="1186"/>
        <end position="1223"/>
    </location>
</feature>
<feature type="region of interest" description="Disordered" evidence="6">
    <location>
        <begin position="31"/>
        <end position="53"/>
    </location>
</feature>
<feature type="region of interest" description="Spacer">
    <location>
        <begin position="747"/>
        <end position="873"/>
    </location>
</feature>
<feature type="short sequence motif" description="Cysteine switch" evidence="1">
    <location>
        <begin position="247"/>
        <end position="254"/>
    </location>
</feature>
<feature type="compositionally biased region" description="Pro residues" evidence="6">
    <location>
        <begin position="40"/>
        <end position="50"/>
    </location>
</feature>
<feature type="active site" evidence="5">
    <location>
        <position position="434"/>
    </location>
</feature>
<feature type="binding site" description="in inhibited form" evidence="1">
    <location>
        <position position="249"/>
    </location>
    <ligand>
        <name>Zn(2+)</name>
        <dbReference type="ChEBI" id="CHEBI:29105"/>
        <note>catalytic</note>
    </ligand>
</feature>
<feature type="binding site" evidence="5">
    <location>
        <position position="433"/>
    </location>
    <ligand>
        <name>Zn(2+)</name>
        <dbReference type="ChEBI" id="CHEBI:29105"/>
        <note>catalytic</note>
    </ligand>
</feature>
<feature type="binding site" evidence="5">
    <location>
        <position position="437"/>
    </location>
    <ligand>
        <name>Zn(2+)</name>
        <dbReference type="ChEBI" id="CHEBI:29105"/>
        <note>catalytic</note>
    </ligand>
</feature>
<feature type="binding site" evidence="5">
    <location>
        <position position="443"/>
    </location>
    <ligand>
        <name>Zn(2+)</name>
        <dbReference type="ChEBI" id="CHEBI:29105"/>
        <note>catalytic</note>
    </ligand>
</feature>
<feature type="glycosylation site" description="N-linked (GlcNAc...) asparagine" evidence="2">
    <location>
        <position position="156"/>
    </location>
</feature>
<feature type="glycosylation site" description="N-linked (GlcNAc...) asparagine" evidence="2">
    <location>
        <position position="310"/>
    </location>
</feature>
<feature type="glycosylation site" description="N-linked (GlcNAc...) asparagine" evidence="2">
    <location>
        <position position="741"/>
    </location>
</feature>
<feature type="glycosylation site" description="N-linked (GlcNAc...) asparagine" evidence="2">
    <location>
        <position position="780"/>
    </location>
</feature>
<feature type="glycosylation site" description="N-linked (GlcNAc...) asparagine" evidence="2">
    <location>
        <position position="835"/>
    </location>
</feature>
<feature type="glycosylation site" description="N-linked (GlcNAc...) asparagine" evidence="2">
    <location>
        <position position="905"/>
    </location>
</feature>
<feature type="glycosylation site" description="N-linked (GlcNAc...) asparagine" evidence="2">
    <location>
        <position position="935"/>
    </location>
</feature>
<feature type="disulfide bond" evidence="1">
    <location>
        <begin position="366"/>
        <end position="417"/>
    </location>
</feature>
<feature type="disulfide bond" evidence="1">
    <location>
        <begin position="392"/>
        <end position="399"/>
    </location>
</feature>
<feature type="disulfide bond" evidence="1">
    <location>
        <begin position="411"/>
        <end position="490"/>
    </location>
</feature>
<feature type="disulfide bond" evidence="1">
    <location>
        <begin position="450"/>
        <end position="474"/>
    </location>
</feature>
<feature type="disulfide bond" evidence="1">
    <location>
        <begin position="518"/>
        <end position="543"/>
    </location>
</feature>
<feature type="disulfide bond" evidence="1">
    <location>
        <begin position="529"/>
        <end position="550"/>
    </location>
</feature>
<feature type="disulfide bond" evidence="1">
    <location>
        <begin position="538"/>
        <end position="569"/>
    </location>
</feature>
<feature type="disulfide bond" evidence="1">
    <location>
        <begin position="563"/>
        <end position="574"/>
    </location>
</feature>
<feature type="disulfide bond" evidence="1">
    <location>
        <begin position="598"/>
        <end position="635"/>
    </location>
</feature>
<feature type="disulfide bond" evidence="1">
    <location>
        <begin position="602"/>
        <end position="640"/>
    </location>
</feature>
<feature type="disulfide bond" evidence="1">
    <location>
        <begin position="613"/>
        <end position="625"/>
    </location>
</feature>
<feature type="disulfide bond" evidence="1">
    <location>
        <begin position="939"/>
        <end position="981"/>
    </location>
</feature>
<feature type="disulfide bond" evidence="1">
    <location>
        <begin position="943"/>
        <end position="986"/>
    </location>
</feature>
<feature type="disulfide bond" evidence="1">
    <location>
        <begin position="954"/>
        <end position="970"/>
    </location>
</feature>
<feature type="splice variant" id="VSP_007664" description="In isoform 2." evidence="7">
    <original>CSVTCERGTQ</original>
    <variation>VGALVSRERG</variation>
    <location>
        <begin position="1063"/>
        <end position="1072"/>
    </location>
</feature>
<feature type="splice variant" id="VSP_007665" description="In isoform 2." evidence="7">
    <location>
        <begin position="1073"/>
        <end position="1224"/>
    </location>
</feature>
<feature type="sequence variant" id="VAR_057076" description="In dbSNP:rs1863968.">
    <original>M</original>
    <variation>V</variation>
    <location>
        <position position="110"/>
    </location>
</feature>
<feature type="sequence variant" id="VAR_057077" description="In dbSNP:rs16875054.">
    <original>A</original>
    <variation>T</variation>
    <location>
        <position position="486"/>
    </location>
</feature>
<feature type="sequence variant" id="VAR_057078" description="In dbSNP:rs9313105.">
    <original>R</original>
    <variation>C</variation>
    <location>
        <position position="789"/>
    </location>
</feature>
<feature type="sequence variant" id="VAR_057079" description="In dbSNP:rs16875122.">
    <original>R</original>
    <variation>L</variation>
    <location>
        <position position="859"/>
    </location>
</feature>
<feature type="sequence variant" id="VAR_057080" description="In dbSNP:rs35394775.">
    <original>E</original>
    <variation>K</variation>
    <location>
        <position position="863"/>
    </location>
</feature>
<feature type="sequence conflict" description="In Ref. 1; CAC86015." evidence="8" ref="1">
    <original>P</original>
    <variation>A</variation>
    <location>
        <position position="90"/>
    </location>
</feature>
<feature type="sequence conflict" description="In Ref. 1; CAC86015." evidence="8" ref="1">
    <original>S</original>
    <variation>P</variation>
    <location>
        <position position="104"/>
    </location>
</feature>
<feature type="sequence conflict" description="In Ref. 4; BAC23125." evidence="8" ref="4">
    <original>S</original>
    <variation>Y</variation>
    <location>
        <position position="284"/>
    </location>
</feature>
<accession>Q8TE57</accession>
<accession>C6G490</accession>
<accession>Q8IVE2</accession>